<name>GDPP1_MACFA</name>
<accession>Q8HXE4</accession>
<evidence type="ECO:0000250" key="1"/>
<evidence type="ECO:0000305" key="2"/>
<comment type="function">
    <text evidence="1">Specific and highly efficient GDP-D-glucose phosphorylase regulating the levels of GDP-D-glucose in cells.</text>
</comment>
<comment type="catalytic activity">
    <reaction>
        <text>GDP-alpha-D-glucose + phosphate = alpha-D-glucose 1-phosphate + GDP + H(+)</text>
        <dbReference type="Rhea" id="RHEA:30387"/>
        <dbReference type="ChEBI" id="CHEBI:15378"/>
        <dbReference type="ChEBI" id="CHEBI:43474"/>
        <dbReference type="ChEBI" id="CHEBI:58189"/>
        <dbReference type="ChEBI" id="CHEBI:58601"/>
        <dbReference type="ChEBI" id="CHEBI:62230"/>
        <dbReference type="EC" id="2.7.7.78"/>
    </reaction>
</comment>
<comment type="subcellular location">
    <subcellularLocation>
        <location evidence="1">Cytoplasm</location>
    </subcellularLocation>
</comment>
<comment type="similarity">
    <text evidence="2">Belongs to the GDPGP1 family.</text>
</comment>
<comment type="caution">
    <text evidence="2">The orthologs in A.thaliana catalyze the first reaction of the Smirnoff-Wheeler pathway, the major route to ascorbate biosynthesis in plants.</text>
</comment>
<dbReference type="EC" id="2.7.7.78"/>
<dbReference type="EMBL" id="AB093646">
    <property type="protein sequence ID" value="BAC21620.1"/>
    <property type="molecule type" value="mRNA"/>
</dbReference>
<dbReference type="RefSeq" id="NP_001306358.1">
    <property type="nucleotide sequence ID" value="NM_001319429.1"/>
</dbReference>
<dbReference type="STRING" id="9541.ENSMFAP00000012271"/>
<dbReference type="eggNOG" id="KOG2720">
    <property type="taxonomic scope" value="Eukaryota"/>
</dbReference>
<dbReference type="Proteomes" id="UP000233100">
    <property type="component" value="Unplaced"/>
</dbReference>
<dbReference type="GO" id="GO:0005737">
    <property type="term" value="C:cytoplasm"/>
    <property type="evidence" value="ECO:0000250"/>
    <property type="project" value="UniProtKB"/>
</dbReference>
<dbReference type="GO" id="GO:0080048">
    <property type="term" value="F:GDP-D-glucose phosphorylase activity"/>
    <property type="evidence" value="ECO:0000250"/>
    <property type="project" value="UniProtKB"/>
</dbReference>
<dbReference type="GO" id="GO:0005085">
    <property type="term" value="F:guanyl-nucleotide exchange factor activity"/>
    <property type="evidence" value="ECO:0007669"/>
    <property type="project" value="UniProtKB-KW"/>
</dbReference>
<dbReference type="GO" id="GO:0016787">
    <property type="term" value="F:hydrolase activity"/>
    <property type="evidence" value="ECO:0007669"/>
    <property type="project" value="UniProtKB-KW"/>
</dbReference>
<dbReference type="GO" id="GO:0000166">
    <property type="term" value="F:nucleotide binding"/>
    <property type="evidence" value="ECO:0007669"/>
    <property type="project" value="UniProtKB-KW"/>
</dbReference>
<dbReference type="GO" id="GO:0006006">
    <property type="term" value="P:glucose metabolic process"/>
    <property type="evidence" value="ECO:0000250"/>
    <property type="project" value="UniProtKB"/>
</dbReference>
<dbReference type="InterPro" id="IPR026506">
    <property type="entry name" value="GDPGP"/>
</dbReference>
<dbReference type="PANTHER" id="PTHR20884">
    <property type="entry name" value="GDP-D-GLUCOSE PHOSPHORYLASE 1"/>
    <property type="match status" value="1"/>
</dbReference>
<dbReference type="PANTHER" id="PTHR20884:SF8">
    <property type="entry name" value="GDP-D-GLUCOSE PHOSPHORYLASE 1"/>
    <property type="match status" value="1"/>
</dbReference>
<protein>
    <recommendedName>
        <fullName>GDP-D-glucose phosphorylase 1</fullName>
        <ecNumber>2.7.7.78</ecNumber>
    </recommendedName>
</protein>
<organism>
    <name type="scientific">Macaca fascicularis</name>
    <name type="common">Crab-eating macaque</name>
    <name type="synonym">Cynomolgus monkey</name>
    <dbReference type="NCBI Taxonomy" id="9541"/>
    <lineage>
        <taxon>Eukaryota</taxon>
        <taxon>Metazoa</taxon>
        <taxon>Chordata</taxon>
        <taxon>Craniata</taxon>
        <taxon>Vertebrata</taxon>
        <taxon>Euteleostomi</taxon>
        <taxon>Mammalia</taxon>
        <taxon>Eutheria</taxon>
        <taxon>Euarchontoglires</taxon>
        <taxon>Primates</taxon>
        <taxon>Haplorrhini</taxon>
        <taxon>Catarrhini</taxon>
        <taxon>Cercopithecidae</taxon>
        <taxon>Cercopithecinae</taxon>
        <taxon>Macaca</taxon>
    </lineage>
</organism>
<feature type="chain" id="PRO_0000336751" description="GDP-D-glucose phosphorylase 1">
    <location>
        <begin position="1"/>
        <end position="385"/>
    </location>
</feature>
<feature type="active site" description="Tele-GMP-histidine intermediate" evidence="1">
    <location>
        <position position="218"/>
    </location>
</feature>
<reference key="1">
    <citation type="submission" date="2005-06" db="EMBL/GenBank/DDBJ databases">
        <title>DNA sequences of macaque genes expressed in brain or testis and its evolutionary implications.</title>
        <authorList>
            <consortium name="International consortium for macaque cDNA sequencing and analysis"/>
        </authorList>
    </citation>
    <scope>NUCLEOTIDE SEQUENCE [LARGE SCALE MRNA]</scope>
    <source>
        <tissue>Frontal cortex</tissue>
    </source>
</reference>
<sequence>MALPHDSNETSYLLPPNNEDWDRQAIPDFVYGQKDLMAEGIQWPRNAPGVLEALPQSPFDAALCSAWKQRVELGLFRYRLRELQTQILPGVVGFVAQLNVERGVQRRRPQTIKSVRQAFDPEQFNFNKIQPGEVLYRLHREPDLPGTLLQEDILVVINVSPLEWGHVLLVPEPARGLPQRLLPGALRAGIEAVLLSLHPGFRVGFNSLGGLASVNHLHLHGYYLAHRLPVEQAPSEPLDPGGHLHLLQGLPAPGFLFYTRGPGLDLESLICRVCRATDYLTDHEIAHNLFVTRGAPPGKTSPSSALTGVRVILWARKSCFGIKDGEAFNVALCELAGHLPVKTSQDFSSLTEAAAVALIQDCRLPPSQAEEVQAALVALMSQKEQ</sequence>
<proteinExistence type="evidence at transcript level"/>
<gene>
    <name type="primary">GDPGP1</name>
    <name type="ORF">QflA-20034</name>
</gene>
<keyword id="KW-0963">Cytoplasm</keyword>
<keyword id="KW-0344">Guanine-nucleotide releasing factor</keyword>
<keyword id="KW-0378">Hydrolase</keyword>
<keyword id="KW-0547">Nucleotide-binding</keyword>
<keyword id="KW-0548">Nucleotidyltransferase</keyword>
<keyword id="KW-1185">Reference proteome</keyword>
<keyword id="KW-0808">Transferase</keyword>